<reference key="1">
    <citation type="submission" date="2006-04" db="EMBL/GenBank/DDBJ databases">
        <authorList>
            <consortium name="NIH - Mammalian Gene Collection (MGC) project"/>
        </authorList>
    </citation>
    <scope>NUCLEOTIDE SEQUENCE [LARGE SCALE MRNA]</scope>
    <source>
        <strain>Hereford</strain>
        <tissue>Thymus</tissue>
    </source>
</reference>
<accession>Q1RMM0</accession>
<feature type="chain" id="PRO_0000333816" description="THAP domain-containing protein 5">
    <location>
        <begin position="1"/>
        <end position="394"/>
    </location>
</feature>
<feature type="zinc finger region" description="THAP-type" evidence="4">
    <location>
        <begin position="1"/>
        <end position="84"/>
    </location>
</feature>
<feature type="region of interest" description="Disordered" evidence="5">
    <location>
        <begin position="86"/>
        <end position="109"/>
    </location>
</feature>
<feature type="coiled-coil region" evidence="3">
    <location>
        <begin position="347"/>
        <end position="381"/>
    </location>
</feature>
<feature type="short sequence motif" description="HCFC1-binding motif (HBM)" evidence="1">
    <location>
        <begin position="320"/>
        <end position="323"/>
    </location>
</feature>
<protein>
    <recommendedName>
        <fullName>THAP domain-containing protein 5</fullName>
    </recommendedName>
</protein>
<comment type="function">
    <text evidence="2">Has sequence-specific DNA-binding activity and can function as transcriptional repressor (in vitro). May be a regulator of cell cycle: THAP5 overexpression in human cell lines causes cell cycle arrest at G2/M phase.</text>
</comment>
<comment type="subunit">
    <text evidence="2">Interacts with HTRA2; under apoptotic conditions. Interacts with ABRAXAS2.</text>
</comment>
<comment type="subcellular location">
    <subcellularLocation>
        <location evidence="2">Nucleus</location>
    </subcellularLocation>
</comment>
<comment type="PTM">
    <text evidence="2">Cleaved by HTRA2 during apoptosis.</text>
</comment>
<comment type="sequence caution" evidence="6">
    <conflict type="erroneous initiation">
        <sequence resource="EMBL-CDS" id="AAI14827"/>
    </conflict>
    <text>Truncated N-terminus.</text>
</comment>
<proteinExistence type="evidence at transcript level"/>
<evidence type="ECO:0000250" key="1"/>
<evidence type="ECO:0000250" key="2">
    <source>
        <dbReference type="UniProtKB" id="Q7Z6K1"/>
    </source>
</evidence>
<evidence type="ECO:0000255" key="3"/>
<evidence type="ECO:0000255" key="4">
    <source>
        <dbReference type="PROSITE-ProRule" id="PRU00309"/>
    </source>
</evidence>
<evidence type="ECO:0000256" key="5">
    <source>
        <dbReference type="SAM" id="MobiDB-lite"/>
    </source>
</evidence>
<evidence type="ECO:0000305" key="6"/>
<sequence>MPRYCAAICCKNRRGRNNKERKLSFYPFPLHDKERLEKWLKNMKRDSWVPSKYQFLCSDHFTPDSLDIRWGIRYLKQTAIPTIFALPEDNQEKDPSKKKSQKKKLKSEKEVCLKAKSEESFASNEPKKHPVNTDLLPEHAELLESSALVKPPDPKAESVQNNILTLSLVKQGTRKPESILETSVNQDMGIGGFHTSFENLSSTTITLTTASSEGIQQPLETQEVIEITTNHLANPHFTNNSVEIKSAQENPFILSTVTQTVEELNTDKESVIAIFVPTENSKPAINSFIPAPKTVEMEEDIDIEDSYKDVDYETEVLQIEHSYCRQDVNKEHLWQKVSKLHSKITLLELQEQQTLGRLKSLEALIRQLKQENWLSEENVKIIENHFTTYEVTMI</sequence>
<keyword id="KW-0131">Cell cycle</keyword>
<keyword id="KW-0175">Coiled coil</keyword>
<keyword id="KW-0238">DNA-binding</keyword>
<keyword id="KW-0479">Metal-binding</keyword>
<keyword id="KW-0539">Nucleus</keyword>
<keyword id="KW-1185">Reference proteome</keyword>
<keyword id="KW-0678">Repressor</keyword>
<keyword id="KW-0804">Transcription</keyword>
<keyword id="KW-0805">Transcription regulation</keyword>
<keyword id="KW-0862">Zinc</keyword>
<keyword id="KW-0863">Zinc-finger</keyword>
<organism>
    <name type="scientific">Bos taurus</name>
    <name type="common">Bovine</name>
    <dbReference type="NCBI Taxonomy" id="9913"/>
    <lineage>
        <taxon>Eukaryota</taxon>
        <taxon>Metazoa</taxon>
        <taxon>Chordata</taxon>
        <taxon>Craniata</taxon>
        <taxon>Vertebrata</taxon>
        <taxon>Euteleostomi</taxon>
        <taxon>Mammalia</taxon>
        <taxon>Eutheria</taxon>
        <taxon>Laurasiatheria</taxon>
        <taxon>Artiodactyla</taxon>
        <taxon>Ruminantia</taxon>
        <taxon>Pecora</taxon>
        <taxon>Bovidae</taxon>
        <taxon>Bovinae</taxon>
        <taxon>Bos</taxon>
    </lineage>
</organism>
<dbReference type="EMBL" id="BC114826">
    <property type="protein sequence ID" value="AAI14827.1"/>
    <property type="status" value="ALT_INIT"/>
    <property type="molecule type" value="mRNA"/>
</dbReference>
<dbReference type="RefSeq" id="NP_001069807.1">
    <property type="nucleotide sequence ID" value="NM_001076339.1"/>
</dbReference>
<dbReference type="SMR" id="Q1RMM0"/>
<dbReference type="FunCoup" id="Q1RMM0">
    <property type="interactions" value="780"/>
</dbReference>
<dbReference type="STRING" id="9913.ENSBTAP00000029153"/>
<dbReference type="PaxDb" id="9913-ENSBTAP00000029153"/>
<dbReference type="GeneID" id="614615"/>
<dbReference type="KEGG" id="bta:614615"/>
<dbReference type="CTD" id="168451"/>
<dbReference type="eggNOG" id="ENOG502RYVM">
    <property type="taxonomic scope" value="Eukaryota"/>
</dbReference>
<dbReference type="HOGENOM" id="CLU_057257_0_0_1"/>
<dbReference type="InParanoid" id="Q1RMM0"/>
<dbReference type="OrthoDB" id="5982876at2759"/>
<dbReference type="Proteomes" id="UP000009136">
    <property type="component" value="Unplaced"/>
</dbReference>
<dbReference type="GO" id="GO:0005634">
    <property type="term" value="C:nucleus"/>
    <property type="evidence" value="ECO:0000250"/>
    <property type="project" value="UniProtKB"/>
</dbReference>
<dbReference type="GO" id="GO:0003677">
    <property type="term" value="F:DNA binding"/>
    <property type="evidence" value="ECO:0007669"/>
    <property type="project" value="UniProtKB-KW"/>
</dbReference>
<dbReference type="GO" id="GO:0008270">
    <property type="term" value="F:zinc ion binding"/>
    <property type="evidence" value="ECO:0007669"/>
    <property type="project" value="UniProtKB-KW"/>
</dbReference>
<dbReference type="GO" id="GO:0045786">
    <property type="term" value="P:negative regulation of cell cycle"/>
    <property type="evidence" value="ECO:0000250"/>
    <property type="project" value="UniProtKB"/>
</dbReference>
<dbReference type="InterPro" id="IPR052224">
    <property type="entry name" value="THAP_domain_protein"/>
</dbReference>
<dbReference type="InterPro" id="IPR006612">
    <property type="entry name" value="THAP_Znf"/>
</dbReference>
<dbReference type="PANTHER" id="PTHR46927">
    <property type="entry name" value="AGAP005574-PA"/>
    <property type="match status" value="1"/>
</dbReference>
<dbReference type="PANTHER" id="PTHR46927:SF1">
    <property type="entry name" value="THAP DOMAIN-CONTAINING PROTEIN 5"/>
    <property type="match status" value="1"/>
</dbReference>
<dbReference type="Pfam" id="PF05485">
    <property type="entry name" value="THAP"/>
    <property type="match status" value="1"/>
</dbReference>
<dbReference type="SMART" id="SM00692">
    <property type="entry name" value="DM3"/>
    <property type="match status" value="1"/>
</dbReference>
<dbReference type="SMART" id="SM00980">
    <property type="entry name" value="THAP"/>
    <property type="match status" value="1"/>
</dbReference>
<dbReference type="SUPFAM" id="SSF57716">
    <property type="entry name" value="Glucocorticoid receptor-like (DNA-binding domain)"/>
    <property type="match status" value="1"/>
</dbReference>
<dbReference type="PROSITE" id="PS50950">
    <property type="entry name" value="ZF_THAP"/>
    <property type="match status" value="1"/>
</dbReference>
<gene>
    <name type="primary">THAP5</name>
</gene>
<name>THAP5_BOVIN</name>